<reference key="1">
    <citation type="submission" date="2008-02" db="EMBL/GenBank/DDBJ databases">
        <title>Genome sequence of Ureaplasma parvum serovar 3.</title>
        <authorList>
            <person name="Methe B.A."/>
            <person name="Glass J."/>
            <person name="Waites K."/>
            <person name="Shrivastava S."/>
        </authorList>
    </citation>
    <scope>NUCLEOTIDE SEQUENCE [LARGE SCALE GENOMIC DNA]</scope>
    <source>
        <strain>ATCC 27815 / 27 / NCTC 11736</strain>
    </source>
</reference>
<organism>
    <name type="scientific">Ureaplasma parvum serovar 3 (strain ATCC 27815 / 27 / NCTC 11736)</name>
    <dbReference type="NCBI Taxonomy" id="505682"/>
    <lineage>
        <taxon>Bacteria</taxon>
        <taxon>Bacillati</taxon>
        <taxon>Mycoplasmatota</taxon>
        <taxon>Mycoplasmoidales</taxon>
        <taxon>Mycoplasmoidaceae</taxon>
        <taxon>Ureaplasma</taxon>
    </lineage>
</organism>
<sequence length="286" mass="32295">MSLDAMKRKINSVQTTAKITNAMKLVATAKLKRQRDRLAAIKEYCHDYYDVIGLLLSVVDDVEFLKIPNAKDRTLYITINSTMGLAGSYNYNVNKLISKIVNETDITFTIGKKGHDFMRLSGRVDQVNTYLNLNDNDLTFDMSLQIAREALELYSQGEVNKICIIYTKFINAITFEVSVIDVLPFDKTALIKDHLAETIELAKDNIIFKPNKFELVKKILPTYIATVLYGSLIESKISENASRRNAMDAATKNAKALAENYKLIYNTLRQGKITREITEIVAGSDD</sequence>
<name>ATPG_UREP2</name>
<evidence type="ECO:0000255" key="1">
    <source>
        <dbReference type="HAMAP-Rule" id="MF_00815"/>
    </source>
</evidence>
<dbReference type="EMBL" id="CP000942">
    <property type="protein sequence ID" value="ACA33232.1"/>
    <property type="molecule type" value="Genomic_DNA"/>
</dbReference>
<dbReference type="RefSeq" id="WP_006688922.1">
    <property type="nucleotide sequence ID" value="NC_010503.1"/>
</dbReference>
<dbReference type="SMR" id="B1AIB9"/>
<dbReference type="GeneID" id="29672729"/>
<dbReference type="KEGG" id="upa:UPA3_0136"/>
<dbReference type="HOGENOM" id="CLU_050669_0_1_14"/>
<dbReference type="Proteomes" id="UP000002162">
    <property type="component" value="Chromosome"/>
</dbReference>
<dbReference type="GO" id="GO:0005886">
    <property type="term" value="C:plasma membrane"/>
    <property type="evidence" value="ECO:0007669"/>
    <property type="project" value="UniProtKB-SubCell"/>
</dbReference>
<dbReference type="GO" id="GO:0045259">
    <property type="term" value="C:proton-transporting ATP synthase complex"/>
    <property type="evidence" value="ECO:0007669"/>
    <property type="project" value="UniProtKB-KW"/>
</dbReference>
<dbReference type="GO" id="GO:0005524">
    <property type="term" value="F:ATP binding"/>
    <property type="evidence" value="ECO:0007669"/>
    <property type="project" value="UniProtKB-UniRule"/>
</dbReference>
<dbReference type="GO" id="GO:0046933">
    <property type="term" value="F:proton-transporting ATP synthase activity, rotational mechanism"/>
    <property type="evidence" value="ECO:0007669"/>
    <property type="project" value="UniProtKB-UniRule"/>
</dbReference>
<dbReference type="GO" id="GO:0042777">
    <property type="term" value="P:proton motive force-driven plasma membrane ATP synthesis"/>
    <property type="evidence" value="ECO:0007669"/>
    <property type="project" value="UniProtKB-UniRule"/>
</dbReference>
<dbReference type="CDD" id="cd12151">
    <property type="entry name" value="F1-ATPase_gamma"/>
    <property type="match status" value="1"/>
</dbReference>
<dbReference type="Gene3D" id="3.40.1380.10">
    <property type="match status" value="1"/>
</dbReference>
<dbReference type="Gene3D" id="1.10.287.80">
    <property type="entry name" value="ATP synthase, gamma subunit, helix hairpin domain"/>
    <property type="match status" value="1"/>
</dbReference>
<dbReference type="HAMAP" id="MF_00815">
    <property type="entry name" value="ATP_synth_gamma_bact"/>
    <property type="match status" value="1"/>
</dbReference>
<dbReference type="InterPro" id="IPR035968">
    <property type="entry name" value="ATP_synth_F1_ATPase_gsu"/>
</dbReference>
<dbReference type="InterPro" id="IPR000131">
    <property type="entry name" value="ATP_synth_F1_gsu"/>
</dbReference>
<dbReference type="NCBIfam" id="TIGR01146">
    <property type="entry name" value="ATPsyn_F1gamma"/>
    <property type="match status" value="1"/>
</dbReference>
<dbReference type="PANTHER" id="PTHR11693">
    <property type="entry name" value="ATP SYNTHASE GAMMA CHAIN"/>
    <property type="match status" value="1"/>
</dbReference>
<dbReference type="PANTHER" id="PTHR11693:SF22">
    <property type="entry name" value="ATP SYNTHASE SUBUNIT GAMMA, MITOCHONDRIAL"/>
    <property type="match status" value="1"/>
</dbReference>
<dbReference type="Pfam" id="PF00231">
    <property type="entry name" value="ATP-synt"/>
    <property type="match status" value="1"/>
</dbReference>
<dbReference type="PRINTS" id="PR00126">
    <property type="entry name" value="ATPASEGAMMA"/>
</dbReference>
<dbReference type="SUPFAM" id="SSF52943">
    <property type="entry name" value="ATP synthase (F1-ATPase), gamma subunit"/>
    <property type="match status" value="1"/>
</dbReference>
<protein>
    <recommendedName>
        <fullName evidence="1">ATP synthase gamma chain</fullName>
    </recommendedName>
    <alternativeName>
        <fullName evidence="1">ATP synthase F1 sector gamma subunit</fullName>
    </alternativeName>
    <alternativeName>
        <fullName evidence="1">F-ATPase gamma subunit</fullName>
    </alternativeName>
</protein>
<proteinExistence type="inferred from homology"/>
<comment type="function">
    <text evidence="1">Produces ATP from ADP in the presence of a proton gradient across the membrane. The gamma chain is believed to be important in regulating ATPase activity and the flow of protons through the CF(0) complex.</text>
</comment>
<comment type="subunit">
    <text evidence="1">F-type ATPases have 2 components, CF(1) - the catalytic core - and CF(0) - the membrane proton channel. CF(1) has five subunits: alpha(3), beta(3), gamma(1), delta(1), epsilon(1). CF(0) has three main subunits: a, b and c.</text>
</comment>
<comment type="subcellular location">
    <subcellularLocation>
        <location evidence="1">Cell membrane</location>
        <topology evidence="1">Peripheral membrane protein</topology>
    </subcellularLocation>
</comment>
<comment type="similarity">
    <text evidence="1">Belongs to the ATPase gamma chain family.</text>
</comment>
<gene>
    <name evidence="1" type="primary">atpG</name>
    <name type="ordered locus">UPA3_0136</name>
</gene>
<keyword id="KW-0066">ATP synthesis</keyword>
<keyword id="KW-1003">Cell membrane</keyword>
<keyword id="KW-0139">CF(1)</keyword>
<keyword id="KW-0375">Hydrogen ion transport</keyword>
<keyword id="KW-0406">Ion transport</keyword>
<keyword id="KW-0472">Membrane</keyword>
<keyword id="KW-0813">Transport</keyword>
<feature type="chain" id="PRO_1000083817" description="ATP synthase gamma chain">
    <location>
        <begin position="1"/>
        <end position="286"/>
    </location>
</feature>
<accession>B1AIB9</accession>